<sequence length="429" mass="47864">MKKMTNLRCIAAQTIEKVVEQGQSLSNVLPAAQKSVGDKDAALLQELCYGVLRTLPQLEWVIGRLMSRPMTGKQRAVHFLIMVGLYQLMFTRIPAHAALAETVEGAVALKRPQLKGLINGVLRQFQRQQDELMQQMNDGDQQYLHPKWLLERLKRAWPAQWKQIVDANNQRPPMWLRVNRQHHSRDAWLTLLEESGKQAFAHPQHGDALRLESPCAVGQLPGFDQGWITVQDVSAQGCVALLAPRDGEQILDLCAAPGGKTTHILEAAPQAKVMAVDVDAQRLARVSENLQRLTMQAEVKQGDGRTPAAWCGDTQFDRILLDAPCSATGVIRRHPDIKWLRRDRDIAELAALQQQILDAVWPHLKPGGTLLYATCSVLPEENHVQIGQFLQRHADATLIETGDLTQPGIQVFPQADGGDGFYYAKLVKQ</sequence>
<protein>
    <recommendedName>
        <fullName evidence="1">Ribosomal RNA small subunit methyltransferase B</fullName>
        <ecNumber evidence="1">2.1.1.176</ecNumber>
    </recommendedName>
    <alternativeName>
        <fullName evidence="1">16S rRNA m5C967 methyltransferase</fullName>
    </alternativeName>
    <alternativeName>
        <fullName evidence="1">rRNA (cytosine-C(5)-)-methyltransferase RsmB</fullName>
    </alternativeName>
</protein>
<reference key="1">
    <citation type="journal article" date="2008" name="Environ. Microbiol.">
        <title>The genome of Erwinia tasmaniensis strain Et1/99, a non-pathogenic bacterium in the genus Erwinia.</title>
        <authorList>
            <person name="Kube M."/>
            <person name="Migdoll A.M."/>
            <person name="Mueller I."/>
            <person name="Kuhl H."/>
            <person name="Beck A."/>
            <person name="Reinhardt R."/>
            <person name="Geider K."/>
        </authorList>
    </citation>
    <scope>NUCLEOTIDE SEQUENCE [LARGE SCALE GENOMIC DNA]</scope>
    <source>
        <strain>DSM 17950 / CFBP 7177 / CIP 109463 / NCPPB 4357 / Et1/99</strain>
    </source>
</reference>
<dbReference type="EC" id="2.1.1.176" evidence="1"/>
<dbReference type="EMBL" id="CU468135">
    <property type="protein sequence ID" value="CAO98176.1"/>
    <property type="molecule type" value="Genomic_DNA"/>
</dbReference>
<dbReference type="RefSeq" id="WP_012442824.1">
    <property type="nucleotide sequence ID" value="NC_010694.1"/>
</dbReference>
<dbReference type="SMR" id="B2VK95"/>
<dbReference type="STRING" id="465817.ETA_31300"/>
<dbReference type="KEGG" id="eta:ETA_31300"/>
<dbReference type="eggNOG" id="COG0144">
    <property type="taxonomic scope" value="Bacteria"/>
</dbReference>
<dbReference type="eggNOG" id="COG0781">
    <property type="taxonomic scope" value="Bacteria"/>
</dbReference>
<dbReference type="HOGENOM" id="CLU_005316_0_4_6"/>
<dbReference type="OrthoDB" id="9810297at2"/>
<dbReference type="Proteomes" id="UP000001726">
    <property type="component" value="Chromosome"/>
</dbReference>
<dbReference type="GO" id="GO:0005829">
    <property type="term" value="C:cytosol"/>
    <property type="evidence" value="ECO:0007669"/>
    <property type="project" value="TreeGrafter"/>
</dbReference>
<dbReference type="GO" id="GO:0003723">
    <property type="term" value="F:RNA binding"/>
    <property type="evidence" value="ECO:0007669"/>
    <property type="project" value="UniProtKB-KW"/>
</dbReference>
<dbReference type="GO" id="GO:0009383">
    <property type="term" value="F:rRNA (cytosine-C5-)-methyltransferase activity"/>
    <property type="evidence" value="ECO:0007669"/>
    <property type="project" value="TreeGrafter"/>
</dbReference>
<dbReference type="GO" id="GO:0006355">
    <property type="term" value="P:regulation of DNA-templated transcription"/>
    <property type="evidence" value="ECO:0007669"/>
    <property type="project" value="InterPro"/>
</dbReference>
<dbReference type="GO" id="GO:0070475">
    <property type="term" value="P:rRNA base methylation"/>
    <property type="evidence" value="ECO:0007669"/>
    <property type="project" value="TreeGrafter"/>
</dbReference>
<dbReference type="CDD" id="cd02440">
    <property type="entry name" value="AdoMet_MTases"/>
    <property type="match status" value="1"/>
</dbReference>
<dbReference type="CDD" id="cd00620">
    <property type="entry name" value="Methyltransferase_Sun"/>
    <property type="match status" value="1"/>
</dbReference>
<dbReference type="FunFam" id="1.10.940.10:FF:000002">
    <property type="entry name" value="Ribosomal RNA small subunit methyltransferase B"/>
    <property type="match status" value="1"/>
</dbReference>
<dbReference type="FunFam" id="3.30.70.1170:FF:000002">
    <property type="entry name" value="Ribosomal RNA small subunit methyltransferase B"/>
    <property type="match status" value="1"/>
</dbReference>
<dbReference type="FunFam" id="3.40.50.150:FF:000022">
    <property type="entry name" value="Ribosomal RNA small subunit methyltransferase B"/>
    <property type="match status" value="1"/>
</dbReference>
<dbReference type="Gene3D" id="1.10.287.730">
    <property type="entry name" value="Helix hairpin bin"/>
    <property type="match status" value="1"/>
</dbReference>
<dbReference type="Gene3D" id="1.10.940.10">
    <property type="entry name" value="NusB-like"/>
    <property type="match status" value="1"/>
</dbReference>
<dbReference type="Gene3D" id="3.30.70.1170">
    <property type="entry name" value="Sun protein, domain 3"/>
    <property type="match status" value="1"/>
</dbReference>
<dbReference type="Gene3D" id="3.40.50.150">
    <property type="entry name" value="Vaccinia Virus protein VP39"/>
    <property type="match status" value="1"/>
</dbReference>
<dbReference type="HAMAP" id="MF_01856">
    <property type="entry name" value="16SrRNA_methyltr_B"/>
    <property type="match status" value="1"/>
</dbReference>
<dbReference type="InterPro" id="IPR049560">
    <property type="entry name" value="MeTrfase_RsmB-F_NOP2_cat"/>
</dbReference>
<dbReference type="InterPro" id="IPR001678">
    <property type="entry name" value="MeTrfase_RsmB-F_NOP2_dom"/>
</dbReference>
<dbReference type="InterPro" id="IPR035926">
    <property type="entry name" value="NusB-like_sf"/>
</dbReference>
<dbReference type="InterPro" id="IPR006027">
    <property type="entry name" value="NusB_RsmB_TIM44"/>
</dbReference>
<dbReference type="InterPro" id="IPR023267">
    <property type="entry name" value="RCMT"/>
</dbReference>
<dbReference type="InterPro" id="IPR004573">
    <property type="entry name" value="rRNA_ssu_MeTfrase_B"/>
</dbReference>
<dbReference type="InterPro" id="IPR023541">
    <property type="entry name" value="rRNA_ssu_MeTfrase_B_ent"/>
</dbReference>
<dbReference type="InterPro" id="IPR054728">
    <property type="entry name" value="RsmB-like_ferredoxin"/>
</dbReference>
<dbReference type="InterPro" id="IPR048019">
    <property type="entry name" value="RsmB-like_N"/>
</dbReference>
<dbReference type="InterPro" id="IPR018314">
    <property type="entry name" value="RsmB/NOL1/NOP2-like_CS"/>
</dbReference>
<dbReference type="InterPro" id="IPR029063">
    <property type="entry name" value="SAM-dependent_MTases_sf"/>
</dbReference>
<dbReference type="NCBIfam" id="NF008149">
    <property type="entry name" value="PRK10901.1"/>
    <property type="match status" value="1"/>
</dbReference>
<dbReference type="NCBIfam" id="NF011494">
    <property type="entry name" value="PRK14902.1"/>
    <property type="match status" value="1"/>
</dbReference>
<dbReference type="NCBIfam" id="TIGR00563">
    <property type="entry name" value="rsmB"/>
    <property type="match status" value="1"/>
</dbReference>
<dbReference type="PANTHER" id="PTHR22807:SF61">
    <property type="entry name" value="NOL1_NOP2_SUN FAMILY PROTEIN _ ANTITERMINATION NUSB DOMAIN-CONTAINING PROTEIN"/>
    <property type="match status" value="1"/>
</dbReference>
<dbReference type="PANTHER" id="PTHR22807">
    <property type="entry name" value="NOP2 YEAST -RELATED NOL1/NOP2/FMU SUN DOMAIN-CONTAINING"/>
    <property type="match status" value="1"/>
</dbReference>
<dbReference type="Pfam" id="PF01189">
    <property type="entry name" value="Methyltr_RsmB-F"/>
    <property type="match status" value="1"/>
</dbReference>
<dbReference type="Pfam" id="PF01029">
    <property type="entry name" value="NusB"/>
    <property type="match status" value="1"/>
</dbReference>
<dbReference type="Pfam" id="PF22458">
    <property type="entry name" value="RsmF-B_ferredox"/>
    <property type="match status" value="1"/>
</dbReference>
<dbReference type="PRINTS" id="PR02008">
    <property type="entry name" value="RCMTFAMILY"/>
</dbReference>
<dbReference type="SUPFAM" id="SSF48013">
    <property type="entry name" value="NusB-like"/>
    <property type="match status" value="1"/>
</dbReference>
<dbReference type="SUPFAM" id="SSF53335">
    <property type="entry name" value="S-adenosyl-L-methionine-dependent methyltransferases"/>
    <property type="match status" value="1"/>
</dbReference>
<dbReference type="PROSITE" id="PS01153">
    <property type="entry name" value="NOL1_NOP2_SUN"/>
    <property type="match status" value="1"/>
</dbReference>
<dbReference type="PROSITE" id="PS51686">
    <property type="entry name" value="SAM_MT_RSMB_NOP"/>
    <property type="match status" value="1"/>
</dbReference>
<gene>
    <name evidence="1" type="primary">rsmB</name>
    <name evidence="1" type="synonym">sun</name>
    <name type="ordered locus">ETA_31300</name>
</gene>
<keyword id="KW-0963">Cytoplasm</keyword>
<keyword id="KW-0489">Methyltransferase</keyword>
<keyword id="KW-1185">Reference proteome</keyword>
<keyword id="KW-0694">RNA-binding</keyword>
<keyword id="KW-0698">rRNA processing</keyword>
<keyword id="KW-0949">S-adenosyl-L-methionine</keyword>
<keyword id="KW-0808">Transferase</keyword>
<name>RSMB_ERWT9</name>
<proteinExistence type="inferred from homology"/>
<feature type="chain" id="PRO_0000366150" description="Ribosomal RNA small subunit methyltransferase B">
    <location>
        <begin position="1"/>
        <end position="429"/>
    </location>
</feature>
<feature type="active site" description="Nucleophile" evidence="1">
    <location>
        <position position="375"/>
    </location>
</feature>
<feature type="binding site" evidence="1">
    <location>
        <begin position="254"/>
        <end position="260"/>
    </location>
    <ligand>
        <name>S-adenosyl-L-methionine</name>
        <dbReference type="ChEBI" id="CHEBI:59789"/>
    </ligand>
</feature>
<feature type="binding site" evidence="1">
    <location>
        <position position="277"/>
    </location>
    <ligand>
        <name>S-adenosyl-L-methionine</name>
        <dbReference type="ChEBI" id="CHEBI:59789"/>
    </ligand>
</feature>
<feature type="binding site" evidence="1">
    <location>
        <position position="303"/>
    </location>
    <ligand>
        <name>S-adenosyl-L-methionine</name>
        <dbReference type="ChEBI" id="CHEBI:59789"/>
    </ligand>
</feature>
<feature type="binding site" evidence="1">
    <location>
        <position position="322"/>
    </location>
    <ligand>
        <name>S-adenosyl-L-methionine</name>
        <dbReference type="ChEBI" id="CHEBI:59789"/>
    </ligand>
</feature>
<comment type="function">
    <text evidence="1">Specifically methylates the cytosine at position 967 (m5C967) of 16S rRNA.</text>
</comment>
<comment type="catalytic activity">
    <reaction evidence="1">
        <text>cytidine(967) in 16S rRNA + S-adenosyl-L-methionine = 5-methylcytidine(967) in 16S rRNA + S-adenosyl-L-homocysteine + H(+)</text>
        <dbReference type="Rhea" id="RHEA:42748"/>
        <dbReference type="Rhea" id="RHEA-COMP:10219"/>
        <dbReference type="Rhea" id="RHEA-COMP:10220"/>
        <dbReference type="ChEBI" id="CHEBI:15378"/>
        <dbReference type="ChEBI" id="CHEBI:57856"/>
        <dbReference type="ChEBI" id="CHEBI:59789"/>
        <dbReference type="ChEBI" id="CHEBI:74483"/>
        <dbReference type="ChEBI" id="CHEBI:82748"/>
        <dbReference type="EC" id="2.1.1.176"/>
    </reaction>
</comment>
<comment type="subcellular location">
    <subcellularLocation>
        <location evidence="1">Cytoplasm</location>
    </subcellularLocation>
</comment>
<comment type="similarity">
    <text evidence="1">Belongs to the class I-like SAM-binding methyltransferase superfamily. RsmB/NOP family.</text>
</comment>
<organism>
    <name type="scientific">Erwinia tasmaniensis (strain DSM 17950 / CFBP 7177 / CIP 109463 / NCPPB 4357 / Et1/99)</name>
    <dbReference type="NCBI Taxonomy" id="465817"/>
    <lineage>
        <taxon>Bacteria</taxon>
        <taxon>Pseudomonadati</taxon>
        <taxon>Pseudomonadota</taxon>
        <taxon>Gammaproteobacteria</taxon>
        <taxon>Enterobacterales</taxon>
        <taxon>Erwiniaceae</taxon>
        <taxon>Erwinia</taxon>
    </lineage>
</organism>
<accession>B2VK95</accession>
<evidence type="ECO:0000255" key="1">
    <source>
        <dbReference type="HAMAP-Rule" id="MF_01856"/>
    </source>
</evidence>